<evidence type="ECO:0000255" key="1">
    <source>
        <dbReference type="HAMAP-Rule" id="MF_00044"/>
    </source>
</evidence>
<keyword id="KW-0030">Aminoacyl-tRNA synthetase</keyword>
<keyword id="KW-0067">ATP-binding</keyword>
<keyword id="KW-0963">Cytoplasm</keyword>
<keyword id="KW-0436">Ligase</keyword>
<keyword id="KW-0547">Nucleotide-binding</keyword>
<keyword id="KW-0648">Protein biosynthesis</keyword>
<keyword id="KW-1185">Reference proteome</keyword>
<name>SYD_HALH5</name>
<dbReference type="EC" id="6.1.1.12" evidence="1"/>
<dbReference type="EMBL" id="BA000004">
    <property type="protein sequence ID" value="BAB04971.1"/>
    <property type="molecule type" value="Genomic_DNA"/>
</dbReference>
<dbReference type="PIR" id="D83806">
    <property type="entry name" value="D83806"/>
</dbReference>
<dbReference type="RefSeq" id="WP_010897420.1">
    <property type="nucleotide sequence ID" value="NC_002570.2"/>
</dbReference>
<dbReference type="SMR" id="Q9KDG1"/>
<dbReference type="STRING" id="272558.gene:10727146"/>
<dbReference type="KEGG" id="bha:BH1252"/>
<dbReference type="eggNOG" id="COG0173">
    <property type="taxonomic scope" value="Bacteria"/>
</dbReference>
<dbReference type="HOGENOM" id="CLU_014330_3_2_9"/>
<dbReference type="OrthoDB" id="9802326at2"/>
<dbReference type="BRENDA" id="6.1.1.23">
    <property type="organism ID" value="661"/>
</dbReference>
<dbReference type="Proteomes" id="UP000001258">
    <property type="component" value="Chromosome"/>
</dbReference>
<dbReference type="GO" id="GO:0005737">
    <property type="term" value="C:cytoplasm"/>
    <property type="evidence" value="ECO:0007669"/>
    <property type="project" value="UniProtKB-SubCell"/>
</dbReference>
<dbReference type="GO" id="GO:0004815">
    <property type="term" value="F:aspartate-tRNA ligase activity"/>
    <property type="evidence" value="ECO:0007669"/>
    <property type="project" value="UniProtKB-UniRule"/>
</dbReference>
<dbReference type="GO" id="GO:0005524">
    <property type="term" value="F:ATP binding"/>
    <property type="evidence" value="ECO:0007669"/>
    <property type="project" value="UniProtKB-UniRule"/>
</dbReference>
<dbReference type="GO" id="GO:0140096">
    <property type="term" value="F:catalytic activity, acting on a protein"/>
    <property type="evidence" value="ECO:0007669"/>
    <property type="project" value="UniProtKB-ARBA"/>
</dbReference>
<dbReference type="GO" id="GO:0003676">
    <property type="term" value="F:nucleic acid binding"/>
    <property type="evidence" value="ECO:0007669"/>
    <property type="project" value="InterPro"/>
</dbReference>
<dbReference type="GO" id="GO:0016740">
    <property type="term" value="F:transferase activity"/>
    <property type="evidence" value="ECO:0007669"/>
    <property type="project" value="UniProtKB-ARBA"/>
</dbReference>
<dbReference type="GO" id="GO:0006422">
    <property type="term" value="P:aspartyl-tRNA aminoacylation"/>
    <property type="evidence" value="ECO:0007669"/>
    <property type="project" value="UniProtKB-UniRule"/>
</dbReference>
<dbReference type="CDD" id="cd00777">
    <property type="entry name" value="AspRS_core"/>
    <property type="match status" value="1"/>
</dbReference>
<dbReference type="CDD" id="cd04317">
    <property type="entry name" value="EcAspRS_like_N"/>
    <property type="match status" value="1"/>
</dbReference>
<dbReference type="Gene3D" id="3.30.930.10">
    <property type="entry name" value="Bira Bifunctional Protein, Domain 2"/>
    <property type="match status" value="1"/>
</dbReference>
<dbReference type="Gene3D" id="3.30.1360.30">
    <property type="entry name" value="GAD-like domain"/>
    <property type="match status" value="1"/>
</dbReference>
<dbReference type="Gene3D" id="2.40.50.140">
    <property type="entry name" value="Nucleic acid-binding proteins"/>
    <property type="match status" value="1"/>
</dbReference>
<dbReference type="HAMAP" id="MF_00044">
    <property type="entry name" value="Asp_tRNA_synth_type1"/>
    <property type="match status" value="1"/>
</dbReference>
<dbReference type="InterPro" id="IPR004364">
    <property type="entry name" value="Aa-tRNA-synt_II"/>
</dbReference>
<dbReference type="InterPro" id="IPR006195">
    <property type="entry name" value="aa-tRNA-synth_II"/>
</dbReference>
<dbReference type="InterPro" id="IPR045864">
    <property type="entry name" value="aa-tRNA-synth_II/BPL/LPL"/>
</dbReference>
<dbReference type="InterPro" id="IPR004524">
    <property type="entry name" value="Asp-tRNA-ligase_1"/>
</dbReference>
<dbReference type="InterPro" id="IPR047089">
    <property type="entry name" value="Asp-tRNA-ligase_1_N"/>
</dbReference>
<dbReference type="InterPro" id="IPR002312">
    <property type="entry name" value="Asp/Asn-tRNA-synth_IIb"/>
</dbReference>
<dbReference type="InterPro" id="IPR047090">
    <property type="entry name" value="AspRS_core"/>
</dbReference>
<dbReference type="InterPro" id="IPR004115">
    <property type="entry name" value="GAD-like_sf"/>
</dbReference>
<dbReference type="InterPro" id="IPR029351">
    <property type="entry name" value="GAD_dom"/>
</dbReference>
<dbReference type="InterPro" id="IPR012340">
    <property type="entry name" value="NA-bd_OB-fold"/>
</dbReference>
<dbReference type="InterPro" id="IPR004365">
    <property type="entry name" value="NA-bd_OB_tRNA"/>
</dbReference>
<dbReference type="NCBIfam" id="TIGR00459">
    <property type="entry name" value="aspS_bact"/>
    <property type="match status" value="1"/>
</dbReference>
<dbReference type="NCBIfam" id="NF001750">
    <property type="entry name" value="PRK00476.1"/>
    <property type="match status" value="1"/>
</dbReference>
<dbReference type="PANTHER" id="PTHR22594:SF5">
    <property type="entry name" value="ASPARTATE--TRNA LIGASE, MITOCHONDRIAL"/>
    <property type="match status" value="1"/>
</dbReference>
<dbReference type="PANTHER" id="PTHR22594">
    <property type="entry name" value="ASPARTYL/LYSYL-TRNA SYNTHETASE"/>
    <property type="match status" value="1"/>
</dbReference>
<dbReference type="Pfam" id="PF02938">
    <property type="entry name" value="GAD"/>
    <property type="match status" value="1"/>
</dbReference>
<dbReference type="Pfam" id="PF00152">
    <property type="entry name" value="tRNA-synt_2"/>
    <property type="match status" value="1"/>
</dbReference>
<dbReference type="Pfam" id="PF01336">
    <property type="entry name" value="tRNA_anti-codon"/>
    <property type="match status" value="1"/>
</dbReference>
<dbReference type="PRINTS" id="PR01042">
    <property type="entry name" value="TRNASYNTHASP"/>
</dbReference>
<dbReference type="SUPFAM" id="SSF55681">
    <property type="entry name" value="Class II aaRS and biotin synthetases"/>
    <property type="match status" value="1"/>
</dbReference>
<dbReference type="SUPFAM" id="SSF55261">
    <property type="entry name" value="GAD domain-like"/>
    <property type="match status" value="1"/>
</dbReference>
<dbReference type="SUPFAM" id="SSF50249">
    <property type="entry name" value="Nucleic acid-binding proteins"/>
    <property type="match status" value="1"/>
</dbReference>
<dbReference type="PROSITE" id="PS50862">
    <property type="entry name" value="AA_TRNA_LIGASE_II"/>
    <property type="match status" value="1"/>
</dbReference>
<organism>
    <name type="scientific">Halalkalibacterium halodurans (strain ATCC BAA-125 / DSM 18197 / FERM 7344 / JCM 9153 / C-125)</name>
    <name type="common">Bacillus halodurans</name>
    <dbReference type="NCBI Taxonomy" id="272558"/>
    <lineage>
        <taxon>Bacteria</taxon>
        <taxon>Bacillati</taxon>
        <taxon>Bacillota</taxon>
        <taxon>Bacilli</taxon>
        <taxon>Bacillales</taxon>
        <taxon>Bacillaceae</taxon>
        <taxon>Halalkalibacterium (ex Joshi et al. 2022)</taxon>
    </lineage>
</organism>
<reference key="1">
    <citation type="journal article" date="2000" name="Nucleic Acids Res.">
        <title>Complete genome sequence of the alkaliphilic bacterium Bacillus halodurans and genomic sequence comparison with Bacillus subtilis.</title>
        <authorList>
            <person name="Takami H."/>
            <person name="Nakasone K."/>
            <person name="Takaki Y."/>
            <person name="Maeno G."/>
            <person name="Sasaki R."/>
            <person name="Masui N."/>
            <person name="Fuji F."/>
            <person name="Hirama C."/>
            <person name="Nakamura Y."/>
            <person name="Ogasawara N."/>
            <person name="Kuhara S."/>
            <person name="Horikoshi K."/>
        </authorList>
    </citation>
    <scope>NUCLEOTIDE SEQUENCE [LARGE SCALE GENOMIC DNA]</scope>
    <source>
        <strain>ATCC BAA-125 / DSM 18197 / FERM 7344 / JCM 9153 / C-125</strain>
    </source>
</reference>
<feature type="chain" id="PRO_0000110825" description="Aspartate--tRNA ligase">
    <location>
        <begin position="1"/>
        <end position="595"/>
    </location>
</feature>
<feature type="region of interest" description="Aspartate" evidence="1">
    <location>
        <begin position="200"/>
        <end position="203"/>
    </location>
</feature>
<feature type="binding site" evidence="1">
    <location>
        <position position="176"/>
    </location>
    <ligand>
        <name>L-aspartate</name>
        <dbReference type="ChEBI" id="CHEBI:29991"/>
    </ligand>
</feature>
<feature type="binding site" evidence="1">
    <location>
        <begin position="222"/>
        <end position="224"/>
    </location>
    <ligand>
        <name>ATP</name>
        <dbReference type="ChEBI" id="CHEBI:30616"/>
    </ligand>
</feature>
<feature type="binding site" evidence="1">
    <location>
        <position position="222"/>
    </location>
    <ligand>
        <name>L-aspartate</name>
        <dbReference type="ChEBI" id="CHEBI:29991"/>
    </ligand>
</feature>
<feature type="binding site" evidence="1">
    <location>
        <position position="231"/>
    </location>
    <ligand>
        <name>ATP</name>
        <dbReference type="ChEBI" id="CHEBI:30616"/>
    </ligand>
</feature>
<feature type="binding site" evidence="1">
    <location>
        <position position="450"/>
    </location>
    <ligand>
        <name>L-aspartate</name>
        <dbReference type="ChEBI" id="CHEBI:29991"/>
    </ligand>
</feature>
<feature type="binding site" evidence="1">
    <location>
        <position position="484"/>
    </location>
    <ligand>
        <name>ATP</name>
        <dbReference type="ChEBI" id="CHEBI:30616"/>
    </ligand>
</feature>
<feature type="binding site" evidence="1">
    <location>
        <position position="491"/>
    </location>
    <ligand>
        <name>L-aspartate</name>
        <dbReference type="ChEBI" id="CHEBI:29991"/>
    </ligand>
</feature>
<feature type="binding site" evidence="1">
    <location>
        <begin position="536"/>
        <end position="539"/>
    </location>
    <ligand>
        <name>ATP</name>
        <dbReference type="ChEBI" id="CHEBI:30616"/>
    </ligand>
</feature>
<gene>
    <name evidence="1" type="primary">aspS</name>
    <name type="ordered locus">BH1252</name>
</gene>
<accession>Q9KDG1</accession>
<proteinExistence type="inferred from homology"/>
<protein>
    <recommendedName>
        <fullName evidence="1">Aspartate--tRNA ligase</fullName>
        <ecNumber evidence="1">6.1.1.12</ecNumber>
    </recommendedName>
    <alternativeName>
        <fullName evidence="1">Aspartyl-tRNA synthetase</fullName>
        <shortName evidence="1">AspRS</shortName>
    </alternativeName>
</protein>
<sequence>MIGRTHHCGQLSEEQVNERVQLKGWVQRRRDLGQVIFVDLRDRSGVVQLVFNSDISQEALETAEKVRNEYVLDVEGVVLKRDPSTVNDKIATGTIEVHVERLTILNKAKSLPFQIEANTDASEDIRLKYRYLDLRRPDMQETMKLRHQTTKLIRDFLDGQEFFEIETPMLTKSTPEGARDYLVPSRVHHGEFYALPQSPQIFKQLLMVSGFERYYQIVRCFRDEDLRADRQPEFTQIDIETSFMDKEDLLTMTENMMAKIMKEVKGLDVALPFPRMTYDDAMNRYGSDKPDTRFEMELIELSDIVKDSDFKVFSSAIKSGGIVKGLNLKGGAGSLSRKEIDGLAEFVKPYGAKGLAWLKVEEGELKGPIAKFFAGETGAELQQAMGAEDGDLLFFAADKKEVVFDSLGALRLKLGKDFNLIDESKFNFLWVVDFPLVEYDEEAKRFVALHHPFTSPKQEDLTKLETDPASVRADAYDLVLNGYELGGGSQRIYQRPVQEKMFAALGFTEEAAQKEFGFLLEAFEYGTPPHGGIALGLDRLVMLLAGRLNLRDTIAFPKTASASCLLTEAPGEVSLEQLLDLNLSIIGHKPDKVNV</sequence>
<comment type="function">
    <text evidence="1">Catalyzes the attachment of L-aspartate to tRNA(Asp) in a two-step reaction: L-aspartate is first activated by ATP to form Asp-AMP and then transferred to the acceptor end of tRNA(Asp).</text>
</comment>
<comment type="catalytic activity">
    <reaction evidence="1">
        <text>tRNA(Asp) + L-aspartate + ATP = L-aspartyl-tRNA(Asp) + AMP + diphosphate</text>
        <dbReference type="Rhea" id="RHEA:19649"/>
        <dbReference type="Rhea" id="RHEA-COMP:9660"/>
        <dbReference type="Rhea" id="RHEA-COMP:9678"/>
        <dbReference type="ChEBI" id="CHEBI:29991"/>
        <dbReference type="ChEBI" id="CHEBI:30616"/>
        <dbReference type="ChEBI" id="CHEBI:33019"/>
        <dbReference type="ChEBI" id="CHEBI:78442"/>
        <dbReference type="ChEBI" id="CHEBI:78516"/>
        <dbReference type="ChEBI" id="CHEBI:456215"/>
        <dbReference type="EC" id="6.1.1.12"/>
    </reaction>
</comment>
<comment type="subunit">
    <text evidence="1">Homodimer.</text>
</comment>
<comment type="subcellular location">
    <subcellularLocation>
        <location evidence="1">Cytoplasm</location>
    </subcellularLocation>
</comment>
<comment type="similarity">
    <text evidence="1">Belongs to the class-II aminoacyl-tRNA synthetase family. Type 1 subfamily.</text>
</comment>